<feature type="chain" id="PRO_0000169375" description="Uncharacterized protein YggT">
    <location>
        <begin position="1"/>
        <end position="188"/>
    </location>
</feature>
<feature type="transmembrane region" description="Helical" evidence="1">
    <location>
        <begin position="1"/>
        <end position="21"/>
    </location>
</feature>
<feature type="transmembrane region" description="Helical" evidence="1">
    <location>
        <begin position="67"/>
        <end position="87"/>
    </location>
</feature>
<feature type="transmembrane region" description="Helical" evidence="1">
    <location>
        <begin position="89"/>
        <end position="109"/>
    </location>
</feature>
<feature type="transmembrane region" description="Helical" evidence="1">
    <location>
        <begin position="145"/>
        <end position="165"/>
    </location>
</feature>
<feature type="transmembrane region" description="Helical" evidence="1">
    <location>
        <begin position="168"/>
        <end position="188"/>
    </location>
</feature>
<comment type="subcellular location">
    <subcellularLocation>
        <location evidence="2">Cell membrane</location>
        <topology evidence="2">Multi-pass membrane protein</topology>
    </subcellularLocation>
</comment>
<comment type="similarity">
    <text evidence="2">Belongs to the YggT family.</text>
</comment>
<evidence type="ECO:0000255" key="1"/>
<evidence type="ECO:0000305" key="2"/>
<sequence>MNTLTFLLSTVIELYTMVLLLRIWMQWAHCDFYNPFSQFVVKVTQPIIGPLRRVIPAMGPIDSASLLVAYILSFIKAIVLFKVVTFLPIIWIAGLLILLKTIGLLIFWVLLVMAIMSWVSQGRSPIEYVLIQLADPLLRPIRRLLPAMGGIDFSPMILVLLLYVINMGVAEVLQATGNMLLPGLWMAL</sequence>
<name>YGGT_ECOLI</name>
<keyword id="KW-1003">Cell membrane</keyword>
<keyword id="KW-0472">Membrane</keyword>
<keyword id="KW-1185">Reference proteome</keyword>
<keyword id="KW-0812">Transmembrane</keyword>
<keyword id="KW-1133">Transmembrane helix</keyword>
<organism>
    <name type="scientific">Escherichia coli (strain K12)</name>
    <dbReference type="NCBI Taxonomy" id="83333"/>
    <lineage>
        <taxon>Bacteria</taxon>
        <taxon>Pseudomonadati</taxon>
        <taxon>Pseudomonadota</taxon>
        <taxon>Gammaproteobacteria</taxon>
        <taxon>Enterobacterales</taxon>
        <taxon>Enterobacteriaceae</taxon>
        <taxon>Escherichia</taxon>
    </lineage>
</organism>
<dbReference type="EMBL" id="U28377">
    <property type="protein sequence ID" value="AAA69119.1"/>
    <property type="molecule type" value="Genomic_DNA"/>
</dbReference>
<dbReference type="EMBL" id="U00096">
    <property type="protein sequence ID" value="AAC75989.1"/>
    <property type="molecule type" value="Genomic_DNA"/>
</dbReference>
<dbReference type="EMBL" id="AP009048">
    <property type="protein sequence ID" value="BAE77015.1"/>
    <property type="molecule type" value="Genomic_DNA"/>
</dbReference>
<dbReference type="PIR" id="G65080">
    <property type="entry name" value="G65080"/>
</dbReference>
<dbReference type="RefSeq" id="NP_417427.1">
    <property type="nucleotide sequence ID" value="NC_000913.3"/>
</dbReference>
<dbReference type="RefSeq" id="WP_001094831.1">
    <property type="nucleotide sequence ID" value="NZ_STEB01000001.1"/>
</dbReference>
<dbReference type="BioGRID" id="4261148">
    <property type="interactions" value="16"/>
</dbReference>
<dbReference type="BioGRID" id="851742">
    <property type="interactions" value="2"/>
</dbReference>
<dbReference type="FunCoup" id="P64564">
    <property type="interactions" value="110"/>
</dbReference>
<dbReference type="IntAct" id="P64564">
    <property type="interactions" value="3"/>
</dbReference>
<dbReference type="STRING" id="511145.b2952"/>
<dbReference type="TCDB" id="9.A.4.1.2">
    <property type="family name" value="the yggt or fanciful k(+) uptake-b (fkub, yggt) family"/>
</dbReference>
<dbReference type="jPOST" id="P64564"/>
<dbReference type="PaxDb" id="511145-b2952"/>
<dbReference type="EnsemblBacteria" id="AAC75989">
    <property type="protein sequence ID" value="AAC75989"/>
    <property type="gene ID" value="b2952"/>
</dbReference>
<dbReference type="GeneID" id="93779045"/>
<dbReference type="GeneID" id="947421"/>
<dbReference type="KEGG" id="ecj:JW2919"/>
<dbReference type="KEGG" id="eco:b2952"/>
<dbReference type="KEGG" id="ecoc:C3026_16155"/>
<dbReference type="PATRIC" id="fig|1411691.4.peg.3780"/>
<dbReference type="EchoBASE" id="EB2805"/>
<dbReference type="eggNOG" id="COG0762">
    <property type="taxonomic scope" value="Bacteria"/>
</dbReference>
<dbReference type="HOGENOM" id="CLU_089905_1_0_6"/>
<dbReference type="InParanoid" id="P64564"/>
<dbReference type="OMA" id="MIDFSPM"/>
<dbReference type="OrthoDB" id="9806665at2"/>
<dbReference type="PhylomeDB" id="P64564"/>
<dbReference type="BioCyc" id="EcoCyc:G7528-MONOMER"/>
<dbReference type="PRO" id="PR:P64564"/>
<dbReference type="Proteomes" id="UP000000625">
    <property type="component" value="Chromosome"/>
</dbReference>
<dbReference type="GO" id="GO:0005886">
    <property type="term" value="C:plasma membrane"/>
    <property type="evidence" value="ECO:0000314"/>
    <property type="project" value="EcoCyc"/>
</dbReference>
<dbReference type="GO" id="GO:0071474">
    <property type="term" value="P:cellular hyperosmotic response"/>
    <property type="evidence" value="ECO:0000269"/>
    <property type="project" value="EcoCyc"/>
</dbReference>
<dbReference type="InterPro" id="IPR003425">
    <property type="entry name" value="CCB3/YggT"/>
</dbReference>
<dbReference type="PANTHER" id="PTHR33219:SF14">
    <property type="entry name" value="PROTEIN COFACTOR ASSEMBLY OF COMPLEX C SUBUNIT B CCB3, CHLOROPLASTIC-RELATED"/>
    <property type="match status" value="1"/>
</dbReference>
<dbReference type="PANTHER" id="PTHR33219">
    <property type="entry name" value="YLMG HOMOLOG PROTEIN 2, CHLOROPLASTIC"/>
    <property type="match status" value="1"/>
</dbReference>
<dbReference type="Pfam" id="PF02325">
    <property type="entry name" value="YGGT"/>
    <property type="match status" value="2"/>
</dbReference>
<proteinExistence type="inferred from homology"/>
<accession>P64564</accession>
<accession>P52058</accession>
<accession>Q2M9P1</accession>
<protein>
    <recommendedName>
        <fullName>Uncharacterized protein YggT</fullName>
    </recommendedName>
</protein>
<gene>
    <name type="primary">yggT</name>
    <name type="ordered locus">b2952</name>
    <name type="ordered locus">JW2919</name>
</gene>
<reference key="1">
    <citation type="journal article" date="1997" name="Science">
        <title>The complete genome sequence of Escherichia coli K-12.</title>
        <authorList>
            <person name="Blattner F.R."/>
            <person name="Plunkett G. III"/>
            <person name="Bloch C.A."/>
            <person name="Perna N.T."/>
            <person name="Burland V."/>
            <person name="Riley M."/>
            <person name="Collado-Vides J."/>
            <person name="Glasner J.D."/>
            <person name="Rode C.K."/>
            <person name="Mayhew G.F."/>
            <person name="Gregor J."/>
            <person name="Davis N.W."/>
            <person name="Kirkpatrick H.A."/>
            <person name="Goeden M.A."/>
            <person name="Rose D.J."/>
            <person name="Mau B."/>
            <person name="Shao Y."/>
        </authorList>
    </citation>
    <scope>NUCLEOTIDE SEQUENCE [LARGE SCALE GENOMIC DNA]</scope>
    <source>
        <strain>K12 / MG1655 / ATCC 47076</strain>
    </source>
</reference>
<reference key="2">
    <citation type="journal article" date="2006" name="Mol. Syst. Biol.">
        <title>Highly accurate genome sequences of Escherichia coli K-12 strains MG1655 and W3110.</title>
        <authorList>
            <person name="Hayashi K."/>
            <person name="Morooka N."/>
            <person name="Yamamoto Y."/>
            <person name="Fujita K."/>
            <person name="Isono K."/>
            <person name="Choi S."/>
            <person name="Ohtsubo E."/>
            <person name="Baba T."/>
            <person name="Wanner B.L."/>
            <person name="Mori H."/>
            <person name="Horiuchi T."/>
        </authorList>
    </citation>
    <scope>NUCLEOTIDE SEQUENCE [LARGE SCALE GENOMIC DNA]</scope>
    <source>
        <strain>K12 / W3110 / ATCC 27325 / DSM 5911</strain>
    </source>
</reference>